<accession>Q3YV71</accession>
<organism>
    <name type="scientific">Shigella sonnei (strain Ss046)</name>
    <dbReference type="NCBI Taxonomy" id="300269"/>
    <lineage>
        <taxon>Bacteria</taxon>
        <taxon>Pseudomonadati</taxon>
        <taxon>Pseudomonadota</taxon>
        <taxon>Gammaproteobacteria</taxon>
        <taxon>Enterobacterales</taxon>
        <taxon>Enterobacteriaceae</taxon>
        <taxon>Shigella</taxon>
    </lineage>
</organism>
<evidence type="ECO:0000255" key="1">
    <source>
        <dbReference type="HAMAP-Rule" id="MF_01534"/>
    </source>
</evidence>
<sequence>MTVLHSVDFFPSGNASVAIEPRLPQADFPEHHHDFHEIVIVEHGTGIHVFNGQPYTITGGTVCFVRAHDRHLYEHTDNLCLTNVLYRSPDRFQFLAGLNQLLPQELDGQYPSHWRVNHSVLQQVRQLVAQMEQQEGENDLPSTASREILFMQLLLLLRKSSLQENLENSASRLNLLLAWLEDHFADEVNWDAVADQFSLSLRTLHRQLKQQTGLTPQRYLNRLRLMKARHLLRHSEASVTDIAYRCGFSDSNHFSTLFRREFNWSPRDIRQGRDGFLQ</sequence>
<reference key="1">
    <citation type="journal article" date="2005" name="Nucleic Acids Res.">
        <title>Genome dynamics and diversity of Shigella species, the etiologic agents of bacillary dysentery.</title>
        <authorList>
            <person name="Yang F."/>
            <person name="Yang J."/>
            <person name="Zhang X."/>
            <person name="Chen L."/>
            <person name="Jiang Y."/>
            <person name="Yan Y."/>
            <person name="Tang X."/>
            <person name="Wang J."/>
            <person name="Xiong Z."/>
            <person name="Dong J."/>
            <person name="Xue Y."/>
            <person name="Zhu Y."/>
            <person name="Xu X."/>
            <person name="Sun L."/>
            <person name="Chen S."/>
            <person name="Nie H."/>
            <person name="Peng J."/>
            <person name="Xu J."/>
            <person name="Wang Y."/>
            <person name="Yuan Z."/>
            <person name="Wen Y."/>
            <person name="Yao Z."/>
            <person name="Shen Y."/>
            <person name="Qiang B."/>
            <person name="Hou Y."/>
            <person name="Yu J."/>
            <person name="Jin Q."/>
        </authorList>
    </citation>
    <scope>NUCLEOTIDE SEQUENCE [LARGE SCALE GENOMIC DNA]</scope>
    <source>
        <strain>Ss046</strain>
    </source>
</reference>
<dbReference type="EMBL" id="CP000038">
    <property type="protein sequence ID" value="AAZ90591.1"/>
    <property type="molecule type" value="Genomic_DNA"/>
</dbReference>
<dbReference type="RefSeq" id="WP_000217126.1">
    <property type="nucleotide sequence ID" value="NC_007384.1"/>
</dbReference>
<dbReference type="SMR" id="Q3YV71"/>
<dbReference type="GeneID" id="93778033"/>
<dbReference type="KEGG" id="ssn:SSON_4075"/>
<dbReference type="HOGENOM" id="CLU_000445_88_5_6"/>
<dbReference type="Proteomes" id="UP000002529">
    <property type="component" value="Chromosome"/>
</dbReference>
<dbReference type="GO" id="GO:0005737">
    <property type="term" value="C:cytoplasm"/>
    <property type="evidence" value="ECO:0007669"/>
    <property type="project" value="UniProtKB-SubCell"/>
</dbReference>
<dbReference type="GO" id="GO:0003700">
    <property type="term" value="F:DNA-binding transcription factor activity"/>
    <property type="evidence" value="ECO:0007669"/>
    <property type="project" value="UniProtKB-UniRule"/>
</dbReference>
<dbReference type="GO" id="GO:0043565">
    <property type="term" value="F:sequence-specific DNA binding"/>
    <property type="evidence" value="ECO:0007669"/>
    <property type="project" value="InterPro"/>
</dbReference>
<dbReference type="GO" id="GO:0045893">
    <property type="term" value="P:positive regulation of DNA-templated transcription"/>
    <property type="evidence" value="ECO:0007669"/>
    <property type="project" value="UniProtKB-UniRule"/>
</dbReference>
<dbReference type="GO" id="GO:0019299">
    <property type="term" value="P:rhamnose metabolic process"/>
    <property type="evidence" value="ECO:0007669"/>
    <property type="project" value="UniProtKB-UniRule"/>
</dbReference>
<dbReference type="CDD" id="cd06977">
    <property type="entry name" value="cupin_RhaR_RhaS-like_N"/>
    <property type="match status" value="1"/>
</dbReference>
<dbReference type="FunFam" id="1.10.10.60:FF:000181">
    <property type="entry name" value="HTH-type transcriptional activator RhaS"/>
    <property type="match status" value="1"/>
</dbReference>
<dbReference type="Gene3D" id="1.10.10.60">
    <property type="entry name" value="Homeodomain-like"/>
    <property type="match status" value="1"/>
</dbReference>
<dbReference type="Gene3D" id="2.60.120.10">
    <property type="entry name" value="Jelly Rolls"/>
    <property type="match status" value="1"/>
</dbReference>
<dbReference type="HAMAP" id="MF_01534">
    <property type="entry name" value="HTH_type_RhaS"/>
    <property type="match status" value="1"/>
</dbReference>
<dbReference type="InterPro" id="IPR003313">
    <property type="entry name" value="AraC-bd"/>
</dbReference>
<dbReference type="InterPro" id="IPR050204">
    <property type="entry name" value="AraC_XylS_family_regulators"/>
</dbReference>
<dbReference type="InterPro" id="IPR009057">
    <property type="entry name" value="Homeodomain-like_sf"/>
</dbReference>
<dbReference type="InterPro" id="IPR037923">
    <property type="entry name" value="HTH-like"/>
</dbReference>
<dbReference type="InterPro" id="IPR018060">
    <property type="entry name" value="HTH_AraC"/>
</dbReference>
<dbReference type="InterPro" id="IPR018062">
    <property type="entry name" value="HTH_AraC-typ_CS"/>
</dbReference>
<dbReference type="InterPro" id="IPR047220">
    <property type="entry name" value="RhaR_RhaS-like_N"/>
</dbReference>
<dbReference type="InterPro" id="IPR014710">
    <property type="entry name" value="RmlC-like_jellyroll"/>
</dbReference>
<dbReference type="InterPro" id="IPR020449">
    <property type="entry name" value="Tscrpt_reg_AraC-type_HTH"/>
</dbReference>
<dbReference type="InterPro" id="IPR023609">
    <property type="entry name" value="Tscrpt_reg_HTH_RhaS"/>
</dbReference>
<dbReference type="NCBIfam" id="NF010028">
    <property type="entry name" value="PRK13503.1"/>
    <property type="match status" value="1"/>
</dbReference>
<dbReference type="PANTHER" id="PTHR46796:SF13">
    <property type="entry name" value="HTH-TYPE TRANSCRIPTIONAL ACTIVATOR RHAS"/>
    <property type="match status" value="1"/>
</dbReference>
<dbReference type="PANTHER" id="PTHR46796">
    <property type="entry name" value="HTH-TYPE TRANSCRIPTIONAL ACTIVATOR RHAS-RELATED"/>
    <property type="match status" value="1"/>
</dbReference>
<dbReference type="Pfam" id="PF02311">
    <property type="entry name" value="AraC_binding"/>
    <property type="match status" value="1"/>
</dbReference>
<dbReference type="Pfam" id="PF12833">
    <property type="entry name" value="HTH_18"/>
    <property type="match status" value="1"/>
</dbReference>
<dbReference type="PRINTS" id="PR00032">
    <property type="entry name" value="HTHARAC"/>
</dbReference>
<dbReference type="SMART" id="SM00342">
    <property type="entry name" value="HTH_ARAC"/>
    <property type="match status" value="1"/>
</dbReference>
<dbReference type="SUPFAM" id="SSF46689">
    <property type="entry name" value="Homeodomain-like"/>
    <property type="match status" value="2"/>
</dbReference>
<dbReference type="SUPFAM" id="SSF51215">
    <property type="entry name" value="Regulatory protein AraC"/>
    <property type="match status" value="1"/>
</dbReference>
<dbReference type="PROSITE" id="PS00041">
    <property type="entry name" value="HTH_ARAC_FAMILY_1"/>
    <property type="match status" value="1"/>
</dbReference>
<dbReference type="PROSITE" id="PS01124">
    <property type="entry name" value="HTH_ARAC_FAMILY_2"/>
    <property type="match status" value="1"/>
</dbReference>
<proteinExistence type="inferred from homology"/>
<protein>
    <recommendedName>
        <fullName evidence="1">HTH-type transcriptional activator RhaS</fullName>
    </recommendedName>
    <alternativeName>
        <fullName evidence="1">L-rhamnose operon regulatory protein RhaS</fullName>
    </alternativeName>
</protein>
<feature type="chain" id="PRO_1000068710" description="HTH-type transcriptional activator RhaS">
    <location>
        <begin position="1"/>
        <end position="278"/>
    </location>
</feature>
<feature type="domain" description="HTH araC/xylS-type" evidence="1">
    <location>
        <begin position="174"/>
        <end position="272"/>
    </location>
</feature>
<feature type="DNA-binding region" description="H-T-H motif" evidence="1">
    <location>
        <begin position="191"/>
        <end position="212"/>
    </location>
</feature>
<feature type="DNA-binding region" description="H-T-H motif" evidence="1">
    <location>
        <begin position="239"/>
        <end position="262"/>
    </location>
</feature>
<feature type="site" description="Interaction with sigma-70" evidence="1">
    <location>
        <position position="241"/>
    </location>
</feature>
<feature type="site" description="Interaction with sigma-70" evidence="1">
    <location>
        <position position="250"/>
    </location>
</feature>
<comment type="function">
    <text evidence="1">Activates expression of the rhaBAD and rhaT operons.</text>
</comment>
<comment type="subunit">
    <text evidence="1">Binds DNA as a dimer.</text>
</comment>
<comment type="subcellular location">
    <subcellularLocation>
        <location evidence="1">Cytoplasm</location>
    </subcellularLocation>
</comment>
<gene>
    <name evidence="1" type="primary">rhaS</name>
    <name type="ordered locus">SSON_4075</name>
</gene>
<keyword id="KW-0010">Activator</keyword>
<keyword id="KW-0963">Cytoplasm</keyword>
<keyword id="KW-0238">DNA-binding</keyword>
<keyword id="KW-1185">Reference proteome</keyword>
<keyword id="KW-0677">Repeat</keyword>
<keyword id="KW-0684">Rhamnose metabolism</keyword>
<keyword id="KW-0804">Transcription</keyword>
<keyword id="KW-0805">Transcription regulation</keyword>
<name>RHAS_SHISS</name>